<dbReference type="EC" id="6.3.4.19" evidence="1"/>
<dbReference type="EMBL" id="AE014291">
    <property type="protein sequence ID" value="AAN30592.1"/>
    <property type="molecule type" value="Genomic_DNA"/>
</dbReference>
<dbReference type="EMBL" id="CP002997">
    <property type="protein sequence ID" value="AEM19009.1"/>
    <property type="molecule type" value="Genomic_DNA"/>
</dbReference>
<dbReference type="RefSeq" id="WP_006192493.1">
    <property type="nucleotide sequence ID" value="NZ_KN046804.1"/>
</dbReference>
<dbReference type="SMR" id="Q8FZ11"/>
<dbReference type="GeneID" id="45052671"/>
<dbReference type="KEGG" id="bms:BR1692"/>
<dbReference type="KEGG" id="bsi:BS1330_I1686"/>
<dbReference type="PATRIC" id="fig|204722.21.peg.2407"/>
<dbReference type="HOGENOM" id="CLU_018869_3_3_5"/>
<dbReference type="PhylomeDB" id="Q8FZ11"/>
<dbReference type="Proteomes" id="UP000007104">
    <property type="component" value="Chromosome I"/>
</dbReference>
<dbReference type="GO" id="GO:0005737">
    <property type="term" value="C:cytoplasm"/>
    <property type="evidence" value="ECO:0007669"/>
    <property type="project" value="UniProtKB-SubCell"/>
</dbReference>
<dbReference type="GO" id="GO:0005524">
    <property type="term" value="F:ATP binding"/>
    <property type="evidence" value="ECO:0007669"/>
    <property type="project" value="UniProtKB-UniRule"/>
</dbReference>
<dbReference type="GO" id="GO:0032267">
    <property type="term" value="F:tRNA(Ile)-lysidine synthase activity"/>
    <property type="evidence" value="ECO:0007669"/>
    <property type="project" value="UniProtKB-EC"/>
</dbReference>
<dbReference type="GO" id="GO:0006400">
    <property type="term" value="P:tRNA modification"/>
    <property type="evidence" value="ECO:0007669"/>
    <property type="project" value="UniProtKB-UniRule"/>
</dbReference>
<dbReference type="CDD" id="cd01992">
    <property type="entry name" value="TilS_N"/>
    <property type="match status" value="1"/>
</dbReference>
<dbReference type="Gene3D" id="3.40.50.620">
    <property type="entry name" value="HUPs"/>
    <property type="match status" value="1"/>
</dbReference>
<dbReference type="HAMAP" id="MF_01161">
    <property type="entry name" value="tRNA_Ile_lys_synt"/>
    <property type="match status" value="1"/>
</dbReference>
<dbReference type="InterPro" id="IPR014729">
    <property type="entry name" value="Rossmann-like_a/b/a_fold"/>
</dbReference>
<dbReference type="InterPro" id="IPR011063">
    <property type="entry name" value="TilS/TtcA_N"/>
</dbReference>
<dbReference type="InterPro" id="IPR012094">
    <property type="entry name" value="tRNA_Ile_lys_synt"/>
</dbReference>
<dbReference type="InterPro" id="IPR012795">
    <property type="entry name" value="tRNA_Ile_lys_synt_N"/>
</dbReference>
<dbReference type="NCBIfam" id="TIGR02432">
    <property type="entry name" value="lysidine_TilS_N"/>
    <property type="match status" value="1"/>
</dbReference>
<dbReference type="PANTHER" id="PTHR43033">
    <property type="entry name" value="TRNA(ILE)-LYSIDINE SYNTHASE-RELATED"/>
    <property type="match status" value="1"/>
</dbReference>
<dbReference type="PANTHER" id="PTHR43033:SF1">
    <property type="entry name" value="TRNA(ILE)-LYSIDINE SYNTHASE-RELATED"/>
    <property type="match status" value="1"/>
</dbReference>
<dbReference type="Pfam" id="PF01171">
    <property type="entry name" value="ATP_bind_3"/>
    <property type="match status" value="1"/>
</dbReference>
<dbReference type="SUPFAM" id="SSF52402">
    <property type="entry name" value="Adenine nucleotide alpha hydrolases-like"/>
    <property type="match status" value="1"/>
</dbReference>
<feature type="chain" id="PRO_0000181663" description="tRNA(Ile)-lysidine synthase">
    <location>
        <begin position="1"/>
        <end position="448"/>
    </location>
</feature>
<feature type="binding site" evidence="1">
    <location>
        <begin position="25"/>
        <end position="30"/>
    </location>
    <ligand>
        <name>ATP</name>
        <dbReference type="ChEBI" id="CHEBI:30616"/>
    </ligand>
</feature>
<keyword id="KW-0067">ATP-binding</keyword>
<keyword id="KW-0963">Cytoplasm</keyword>
<keyword id="KW-0436">Ligase</keyword>
<keyword id="KW-0547">Nucleotide-binding</keyword>
<keyword id="KW-0819">tRNA processing</keyword>
<proteinExistence type="inferred from homology"/>
<sequence length="448" mass="48545">MGLSPVNIFKPFGLGRAKAVIAAVSGGSDSLGLLFLLKDYLSTLESPPVLIAVTVDHKLRAESALEAENVGLLCQKHGIMHCVLSWDDPKPAHGLAAAARTARYRLLVQAARDAGAGFIVTGHTENDQIETFLMRKARSGHCEARGLAAMSPRSLLEGSVKLARPLLTVSRQALRDELTRRGIAWVDDPSNANIDYERPRVRLGVAAEADGQEVLEQIAQAGAARERDNAALVEALADPATLGVDAAGMMFLNADCYAALSPGARQLFSGLLASIAGGRRFLPGDGERRRIERMLSGQDAPRRLTVFGALIERGEKGAPHRFRRERRNLPKLDLVPGQHIVWDGRFCFFNSGGRSFEIAPPGRQELIDFLKNSGRDIESRRCEALLISPALYEGGKLASVPFLPGAEWPQGVHIERHFAIFDHVLPGHDFALAQAVEARLGRACAEIS</sequence>
<reference key="1">
    <citation type="journal article" date="2002" name="Proc. Natl. Acad. Sci. U.S.A.">
        <title>The Brucella suis genome reveals fundamental similarities between animal and plant pathogens and symbionts.</title>
        <authorList>
            <person name="Paulsen I.T."/>
            <person name="Seshadri R."/>
            <person name="Nelson K.E."/>
            <person name="Eisen J.A."/>
            <person name="Heidelberg J.F."/>
            <person name="Read T.D."/>
            <person name="Dodson R.J."/>
            <person name="Umayam L.A."/>
            <person name="Brinkac L.M."/>
            <person name="Beanan M.J."/>
            <person name="Daugherty S.C."/>
            <person name="DeBoy R.T."/>
            <person name="Durkin A.S."/>
            <person name="Kolonay J.F."/>
            <person name="Madupu R."/>
            <person name="Nelson W.C."/>
            <person name="Ayodeji B."/>
            <person name="Kraul M."/>
            <person name="Shetty J."/>
            <person name="Malek J.A."/>
            <person name="Van Aken S.E."/>
            <person name="Riedmuller S."/>
            <person name="Tettelin H."/>
            <person name="Gill S.R."/>
            <person name="White O."/>
            <person name="Salzberg S.L."/>
            <person name="Hoover D.L."/>
            <person name="Lindler L.E."/>
            <person name="Halling S.M."/>
            <person name="Boyle S.M."/>
            <person name="Fraser C.M."/>
        </authorList>
    </citation>
    <scope>NUCLEOTIDE SEQUENCE [LARGE SCALE GENOMIC DNA]</scope>
    <source>
        <strain>1330</strain>
    </source>
</reference>
<reference key="2">
    <citation type="journal article" date="2011" name="J. Bacteriol.">
        <title>Revised genome sequence of Brucella suis 1330.</title>
        <authorList>
            <person name="Tae H."/>
            <person name="Shallom S."/>
            <person name="Settlage R."/>
            <person name="Preston D."/>
            <person name="Adams L.G."/>
            <person name="Garner H.R."/>
        </authorList>
    </citation>
    <scope>NUCLEOTIDE SEQUENCE [LARGE SCALE GENOMIC DNA]</scope>
    <source>
        <strain>1330</strain>
    </source>
</reference>
<evidence type="ECO:0000255" key="1">
    <source>
        <dbReference type="HAMAP-Rule" id="MF_01161"/>
    </source>
</evidence>
<name>TILS_BRUSU</name>
<comment type="function">
    <text evidence="1">Ligates lysine onto the cytidine present at position 34 of the AUA codon-specific tRNA(Ile) that contains the anticodon CAU, in an ATP-dependent manner. Cytidine is converted to lysidine, thus changing the amino acid specificity of the tRNA from methionine to isoleucine.</text>
</comment>
<comment type="catalytic activity">
    <reaction evidence="1">
        <text>cytidine(34) in tRNA(Ile2) + L-lysine + ATP = lysidine(34) in tRNA(Ile2) + AMP + diphosphate + H(+)</text>
        <dbReference type="Rhea" id="RHEA:43744"/>
        <dbReference type="Rhea" id="RHEA-COMP:10625"/>
        <dbReference type="Rhea" id="RHEA-COMP:10670"/>
        <dbReference type="ChEBI" id="CHEBI:15378"/>
        <dbReference type="ChEBI" id="CHEBI:30616"/>
        <dbReference type="ChEBI" id="CHEBI:32551"/>
        <dbReference type="ChEBI" id="CHEBI:33019"/>
        <dbReference type="ChEBI" id="CHEBI:82748"/>
        <dbReference type="ChEBI" id="CHEBI:83665"/>
        <dbReference type="ChEBI" id="CHEBI:456215"/>
        <dbReference type="EC" id="6.3.4.19"/>
    </reaction>
</comment>
<comment type="subcellular location">
    <subcellularLocation>
        <location evidence="1">Cytoplasm</location>
    </subcellularLocation>
</comment>
<comment type="domain">
    <text>The N-terminal region contains the highly conserved SGGXDS motif, predicted to be a P-loop motif involved in ATP binding.</text>
</comment>
<comment type="similarity">
    <text evidence="1">Belongs to the tRNA(Ile)-lysidine synthase family.</text>
</comment>
<gene>
    <name evidence="1" type="primary">tilS</name>
    <name type="ordered locus">BR1692</name>
    <name type="ordered locus">BS1330_I1686</name>
</gene>
<protein>
    <recommendedName>
        <fullName evidence="1">tRNA(Ile)-lysidine synthase</fullName>
        <ecNumber evidence="1">6.3.4.19</ecNumber>
    </recommendedName>
    <alternativeName>
        <fullName evidence="1">tRNA(Ile)-2-lysyl-cytidine synthase</fullName>
    </alternativeName>
    <alternativeName>
        <fullName evidence="1">tRNA(Ile)-lysidine synthetase</fullName>
    </alternativeName>
</protein>
<organism>
    <name type="scientific">Brucella suis biovar 1 (strain 1330)</name>
    <dbReference type="NCBI Taxonomy" id="204722"/>
    <lineage>
        <taxon>Bacteria</taxon>
        <taxon>Pseudomonadati</taxon>
        <taxon>Pseudomonadota</taxon>
        <taxon>Alphaproteobacteria</taxon>
        <taxon>Hyphomicrobiales</taxon>
        <taxon>Brucellaceae</taxon>
        <taxon>Brucella/Ochrobactrum group</taxon>
        <taxon>Brucella</taxon>
    </lineage>
</organism>
<accession>Q8FZ11</accession>
<accession>G0K6V4</accession>